<reference key="1">
    <citation type="journal article" date="2006" name="Proc. Natl. Acad. Sci. U.S.A.">
        <title>Comparative genomics of the lactic acid bacteria.</title>
        <authorList>
            <person name="Makarova K.S."/>
            <person name="Slesarev A."/>
            <person name="Wolf Y.I."/>
            <person name="Sorokin A."/>
            <person name="Mirkin B."/>
            <person name="Koonin E.V."/>
            <person name="Pavlov A."/>
            <person name="Pavlova N."/>
            <person name="Karamychev V."/>
            <person name="Polouchine N."/>
            <person name="Shakhova V."/>
            <person name="Grigoriev I."/>
            <person name="Lou Y."/>
            <person name="Rohksar D."/>
            <person name="Lucas S."/>
            <person name="Huang K."/>
            <person name="Goodstein D.M."/>
            <person name="Hawkins T."/>
            <person name="Plengvidhya V."/>
            <person name="Welker D."/>
            <person name="Hughes J."/>
            <person name="Goh Y."/>
            <person name="Benson A."/>
            <person name="Baldwin K."/>
            <person name="Lee J.-H."/>
            <person name="Diaz-Muniz I."/>
            <person name="Dosti B."/>
            <person name="Smeianov V."/>
            <person name="Wechter W."/>
            <person name="Barabote R."/>
            <person name="Lorca G."/>
            <person name="Altermann E."/>
            <person name="Barrangou R."/>
            <person name="Ganesan B."/>
            <person name="Xie Y."/>
            <person name="Rawsthorne H."/>
            <person name="Tamir D."/>
            <person name="Parker C."/>
            <person name="Breidt F."/>
            <person name="Broadbent J.R."/>
            <person name="Hutkins R."/>
            <person name="O'Sullivan D."/>
            <person name="Steele J."/>
            <person name="Unlu G."/>
            <person name="Saier M.H. Jr."/>
            <person name="Klaenhammer T."/>
            <person name="Richardson P."/>
            <person name="Kozyavkin S."/>
            <person name="Weimer B.C."/>
            <person name="Mills D.A."/>
        </authorList>
    </citation>
    <scope>NUCLEOTIDE SEQUENCE [LARGE SCALE GENOMIC DNA]</scope>
    <source>
        <strain>ATCC 367 / BCRC 12310 / CIP 105137 / JCM 1170 / LMG 11437 / NCIMB 947 / NCTC 947</strain>
    </source>
</reference>
<accession>Q03Q10</accession>
<dbReference type="EC" id="2.4.2.22" evidence="1"/>
<dbReference type="EMBL" id="CP000416">
    <property type="protein sequence ID" value="ABJ64712.1"/>
    <property type="molecule type" value="Genomic_DNA"/>
</dbReference>
<dbReference type="RefSeq" id="WP_011668337.1">
    <property type="nucleotide sequence ID" value="NC_008497.1"/>
</dbReference>
<dbReference type="SMR" id="Q03Q10"/>
<dbReference type="STRING" id="387344.LVIS_1636"/>
<dbReference type="KEGG" id="lbr:LVIS_1636"/>
<dbReference type="eggNOG" id="COG0503">
    <property type="taxonomic scope" value="Bacteria"/>
</dbReference>
<dbReference type="HOGENOM" id="CLU_099015_0_0_9"/>
<dbReference type="UniPathway" id="UPA00602">
    <property type="reaction ID" value="UER00658"/>
</dbReference>
<dbReference type="Proteomes" id="UP000001652">
    <property type="component" value="Chromosome"/>
</dbReference>
<dbReference type="GO" id="GO:0005737">
    <property type="term" value="C:cytoplasm"/>
    <property type="evidence" value="ECO:0007669"/>
    <property type="project" value="UniProtKB-SubCell"/>
</dbReference>
<dbReference type="GO" id="GO:0000310">
    <property type="term" value="F:xanthine phosphoribosyltransferase activity"/>
    <property type="evidence" value="ECO:0007669"/>
    <property type="project" value="UniProtKB-UniRule"/>
</dbReference>
<dbReference type="GO" id="GO:0006166">
    <property type="term" value="P:purine ribonucleoside salvage"/>
    <property type="evidence" value="ECO:0007669"/>
    <property type="project" value="UniProtKB-KW"/>
</dbReference>
<dbReference type="GO" id="GO:0046110">
    <property type="term" value="P:xanthine metabolic process"/>
    <property type="evidence" value="ECO:0007669"/>
    <property type="project" value="InterPro"/>
</dbReference>
<dbReference type="GO" id="GO:0032265">
    <property type="term" value="P:XMP salvage"/>
    <property type="evidence" value="ECO:0007669"/>
    <property type="project" value="UniProtKB-UniRule"/>
</dbReference>
<dbReference type="CDD" id="cd06223">
    <property type="entry name" value="PRTases_typeI"/>
    <property type="match status" value="1"/>
</dbReference>
<dbReference type="Gene3D" id="3.40.50.2020">
    <property type="match status" value="1"/>
</dbReference>
<dbReference type="HAMAP" id="MF_01184">
    <property type="entry name" value="XPRTase"/>
    <property type="match status" value="1"/>
</dbReference>
<dbReference type="InterPro" id="IPR000836">
    <property type="entry name" value="PRibTrfase_dom"/>
</dbReference>
<dbReference type="InterPro" id="IPR029057">
    <property type="entry name" value="PRTase-like"/>
</dbReference>
<dbReference type="InterPro" id="IPR050118">
    <property type="entry name" value="Pur/Pyrimidine_PRTase"/>
</dbReference>
<dbReference type="InterPro" id="IPR010079">
    <property type="entry name" value="Xanthine_PRibTrfase"/>
</dbReference>
<dbReference type="NCBIfam" id="NF006671">
    <property type="entry name" value="PRK09219.1"/>
    <property type="match status" value="1"/>
</dbReference>
<dbReference type="NCBIfam" id="TIGR01744">
    <property type="entry name" value="XPRTase"/>
    <property type="match status" value="1"/>
</dbReference>
<dbReference type="PANTHER" id="PTHR43864">
    <property type="entry name" value="HYPOXANTHINE/GUANINE PHOSPHORIBOSYLTRANSFERASE"/>
    <property type="match status" value="1"/>
</dbReference>
<dbReference type="PANTHER" id="PTHR43864:SF1">
    <property type="entry name" value="XANTHINE PHOSPHORIBOSYLTRANSFERASE"/>
    <property type="match status" value="1"/>
</dbReference>
<dbReference type="Pfam" id="PF00156">
    <property type="entry name" value="Pribosyltran"/>
    <property type="match status" value="1"/>
</dbReference>
<dbReference type="SUPFAM" id="SSF53271">
    <property type="entry name" value="PRTase-like"/>
    <property type="match status" value="1"/>
</dbReference>
<organism>
    <name type="scientific">Levilactobacillus brevis (strain ATCC 367 / BCRC 12310 / CIP 105137 / JCM 1170 / LMG 11437 / NCIMB 947 / NCTC 947)</name>
    <name type="common">Lactobacillus brevis</name>
    <dbReference type="NCBI Taxonomy" id="387344"/>
    <lineage>
        <taxon>Bacteria</taxon>
        <taxon>Bacillati</taxon>
        <taxon>Bacillota</taxon>
        <taxon>Bacilli</taxon>
        <taxon>Lactobacillales</taxon>
        <taxon>Lactobacillaceae</taxon>
        <taxon>Levilactobacillus</taxon>
    </lineage>
</organism>
<evidence type="ECO:0000255" key="1">
    <source>
        <dbReference type="HAMAP-Rule" id="MF_01184"/>
    </source>
</evidence>
<proteinExistence type="inferred from homology"/>
<feature type="chain" id="PRO_0000339702" description="Xanthine phosphoribosyltransferase">
    <location>
        <begin position="1"/>
        <end position="191"/>
    </location>
</feature>
<feature type="binding site" evidence="1">
    <location>
        <position position="20"/>
    </location>
    <ligand>
        <name>xanthine</name>
        <dbReference type="ChEBI" id="CHEBI:17712"/>
    </ligand>
</feature>
<feature type="binding site" evidence="1">
    <location>
        <position position="27"/>
    </location>
    <ligand>
        <name>xanthine</name>
        <dbReference type="ChEBI" id="CHEBI:17712"/>
    </ligand>
</feature>
<feature type="binding site" evidence="1">
    <location>
        <begin position="128"/>
        <end position="132"/>
    </location>
    <ligand>
        <name>5-phospho-alpha-D-ribose 1-diphosphate</name>
        <dbReference type="ChEBI" id="CHEBI:58017"/>
    </ligand>
</feature>
<feature type="binding site" evidence="1">
    <location>
        <position position="156"/>
    </location>
    <ligand>
        <name>xanthine</name>
        <dbReference type="ChEBI" id="CHEBI:17712"/>
    </ligand>
</feature>
<gene>
    <name evidence="1" type="primary">xpt</name>
    <name type="ordered locus">LVIS_1636</name>
</gene>
<name>XPT_LEVBA</name>
<protein>
    <recommendedName>
        <fullName evidence="1">Xanthine phosphoribosyltransferase</fullName>
        <shortName evidence="1">XPRTase</shortName>
        <ecNumber evidence="1">2.4.2.22</ecNumber>
    </recommendedName>
</protein>
<keyword id="KW-0963">Cytoplasm</keyword>
<keyword id="KW-0328">Glycosyltransferase</keyword>
<keyword id="KW-0660">Purine salvage</keyword>
<keyword id="KW-1185">Reference proteome</keyword>
<keyword id="KW-0808">Transferase</keyword>
<comment type="function">
    <text evidence="1">Converts the preformed base xanthine, a product of nucleic acid breakdown, to xanthosine 5'-monophosphate (XMP), so it can be reused for RNA or DNA synthesis.</text>
</comment>
<comment type="catalytic activity">
    <reaction evidence="1">
        <text>XMP + diphosphate = xanthine + 5-phospho-alpha-D-ribose 1-diphosphate</text>
        <dbReference type="Rhea" id="RHEA:10800"/>
        <dbReference type="ChEBI" id="CHEBI:17712"/>
        <dbReference type="ChEBI" id="CHEBI:33019"/>
        <dbReference type="ChEBI" id="CHEBI:57464"/>
        <dbReference type="ChEBI" id="CHEBI:58017"/>
        <dbReference type="EC" id="2.4.2.22"/>
    </reaction>
</comment>
<comment type="pathway">
    <text evidence="1">Purine metabolism; XMP biosynthesis via salvage pathway; XMP from xanthine: step 1/1.</text>
</comment>
<comment type="subunit">
    <text evidence="1">Homodimer.</text>
</comment>
<comment type="subcellular location">
    <subcellularLocation>
        <location evidence="1">Cytoplasm</location>
    </subcellularLocation>
</comment>
<comment type="similarity">
    <text evidence="1">Belongs to the purine/pyrimidine phosphoribosyltransferase family. Xpt subfamily.</text>
</comment>
<sequence>MKILEDRIRQDGTVLTGNVLKVDNFLNHQVDPQLMNELGQEFARRFQDAHITKILTVESSGIAPAVMAGLHLNVPVIFARKHKSLTLTDNLYTAKVYSYTKQVTNEISIDRRFLAADDRVLIIDDFLANGQAVQGLLDIAKTAQITVAGVGVVIEKRFQKGHQMVTDAGIQLEALASIASFEAGQVIFAQD</sequence>